<evidence type="ECO:0000250" key="1">
    <source>
        <dbReference type="UniProtKB" id="Q8K4Z3"/>
    </source>
</evidence>
<evidence type="ECO:0000250" key="2">
    <source>
        <dbReference type="UniProtKB" id="Q8NCW5"/>
    </source>
</evidence>
<evidence type="ECO:0000255" key="3">
    <source>
        <dbReference type="HAMAP-Rule" id="MF_03159"/>
    </source>
</evidence>
<evidence type="ECO:0000312" key="4">
    <source>
        <dbReference type="RGD" id="1304699"/>
    </source>
</evidence>
<proteinExistence type="evidence at transcript level"/>
<dbReference type="EC" id="5.1.99.6" evidence="2"/>
<dbReference type="EMBL" id="CH473976">
    <property type="protein sequence ID" value="EDM00740.1"/>
    <property type="molecule type" value="Genomic_DNA"/>
</dbReference>
<dbReference type="EMBL" id="BC158876">
    <property type="protein sequence ID" value="AAI58877.1"/>
    <property type="molecule type" value="mRNA"/>
</dbReference>
<dbReference type="RefSeq" id="NP_001386156.1">
    <property type="nucleotide sequence ID" value="NM_001399227.1"/>
</dbReference>
<dbReference type="RefSeq" id="XP_006232671.1">
    <property type="nucleotide sequence ID" value="XM_006232609.2"/>
</dbReference>
<dbReference type="SMR" id="B0BNM1"/>
<dbReference type="FunCoup" id="B0BNM1">
    <property type="interactions" value="2005"/>
</dbReference>
<dbReference type="STRING" id="10116.ENSRNOP00000025986"/>
<dbReference type="iPTMnet" id="B0BNM1"/>
<dbReference type="PhosphoSitePlus" id="B0BNM1"/>
<dbReference type="jPOST" id="B0BNM1"/>
<dbReference type="PaxDb" id="10116-ENSRNOP00000025986"/>
<dbReference type="PeptideAtlas" id="B0BNM1"/>
<dbReference type="Ensembl" id="ENSRNOT00000025986.4">
    <property type="protein sequence ID" value="ENSRNOP00000025986.2"/>
    <property type="gene ID" value="ENSRNOG00000019201.4"/>
</dbReference>
<dbReference type="GeneID" id="295229"/>
<dbReference type="AGR" id="RGD:1304699"/>
<dbReference type="RGD" id="1304699">
    <property type="gene designation" value="Naxe"/>
</dbReference>
<dbReference type="eggNOG" id="KOG2585">
    <property type="taxonomic scope" value="Eukaryota"/>
</dbReference>
<dbReference type="GeneTree" id="ENSGT00390000007227"/>
<dbReference type="HOGENOM" id="CLU_024853_3_0_1"/>
<dbReference type="InParanoid" id="B0BNM1"/>
<dbReference type="OMA" id="RHLFHYG"/>
<dbReference type="OrthoDB" id="10064708at2759"/>
<dbReference type="PhylomeDB" id="B0BNM1"/>
<dbReference type="TreeFam" id="TF300197"/>
<dbReference type="BRENDA" id="5.1.99.6">
    <property type="organism ID" value="5301"/>
</dbReference>
<dbReference type="Reactome" id="R-RNO-197264">
    <property type="pathway name" value="Nicotinamide salvaging"/>
</dbReference>
<dbReference type="PRO" id="PR:B0BNM1"/>
<dbReference type="Proteomes" id="UP000002494">
    <property type="component" value="Chromosome 2"/>
</dbReference>
<dbReference type="Proteomes" id="UP000234681">
    <property type="component" value="Chromosome 2"/>
</dbReference>
<dbReference type="Bgee" id="ENSRNOG00000019201">
    <property type="expression patterns" value="Expressed in ovary and 20 other cell types or tissues"/>
</dbReference>
<dbReference type="GO" id="GO:0044297">
    <property type="term" value="C:cell body"/>
    <property type="evidence" value="ECO:0000266"/>
    <property type="project" value="RGD"/>
</dbReference>
<dbReference type="GO" id="GO:0005929">
    <property type="term" value="C:cilium"/>
    <property type="evidence" value="ECO:0000266"/>
    <property type="project" value="RGD"/>
</dbReference>
<dbReference type="GO" id="GO:0005829">
    <property type="term" value="C:cytosol"/>
    <property type="evidence" value="ECO:0000266"/>
    <property type="project" value="RGD"/>
</dbReference>
<dbReference type="GO" id="GO:0005576">
    <property type="term" value="C:extracellular region"/>
    <property type="evidence" value="ECO:0000266"/>
    <property type="project" value="RGD"/>
</dbReference>
<dbReference type="GO" id="GO:0005615">
    <property type="term" value="C:extracellular space"/>
    <property type="evidence" value="ECO:0000266"/>
    <property type="project" value="RGD"/>
</dbReference>
<dbReference type="GO" id="GO:0005739">
    <property type="term" value="C:mitochondrion"/>
    <property type="evidence" value="ECO:0000266"/>
    <property type="project" value="RGD"/>
</dbReference>
<dbReference type="GO" id="GO:0005634">
    <property type="term" value="C:nucleus"/>
    <property type="evidence" value="ECO:0007669"/>
    <property type="project" value="Ensembl"/>
</dbReference>
<dbReference type="GO" id="GO:0042802">
    <property type="term" value="F:identical protein binding"/>
    <property type="evidence" value="ECO:0000266"/>
    <property type="project" value="RGD"/>
</dbReference>
<dbReference type="GO" id="GO:0046872">
    <property type="term" value="F:metal ion binding"/>
    <property type="evidence" value="ECO:0007669"/>
    <property type="project" value="UniProtKB-KW"/>
</dbReference>
<dbReference type="GO" id="GO:0052856">
    <property type="term" value="F:NAD(P)HX epimerase activity"/>
    <property type="evidence" value="ECO:0000314"/>
    <property type="project" value="MGI"/>
</dbReference>
<dbReference type="GO" id="GO:0000166">
    <property type="term" value="F:nucleotide binding"/>
    <property type="evidence" value="ECO:0007669"/>
    <property type="project" value="UniProtKB-KW"/>
</dbReference>
<dbReference type="GO" id="GO:0006869">
    <property type="term" value="P:lipid transport"/>
    <property type="evidence" value="ECO:0007669"/>
    <property type="project" value="UniProtKB-KW"/>
</dbReference>
<dbReference type="GO" id="GO:0031580">
    <property type="term" value="P:membrane raft distribution"/>
    <property type="evidence" value="ECO:0000250"/>
    <property type="project" value="UniProtKB"/>
</dbReference>
<dbReference type="GO" id="GO:0110051">
    <property type="term" value="P:metabolite repair"/>
    <property type="evidence" value="ECO:0000314"/>
    <property type="project" value="FlyBase"/>
</dbReference>
<dbReference type="GO" id="GO:0016525">
    <property type="term" value="P:negative regulation of angiogenesis"/>
    <property type="evidence" value="ECO:0000250"/>
    <property type="project" value="UniProtKB"/>
</dbReference>
<dbReference type="GO" id="GO:0046496">
    <property type="term" value="P:nicotinamide nucleotide metabolic process"/>
    <property type="evidence" value="ECO:0000266"/>
    <property type="project" value="RGD"/>
</dbReference>
<dbReference type="GO" id="GO:0010874">
    <property type="term" value="P:regulation of cholesterol efflux"/>
    <property type="evidence" value="ECO:0000250"/>
    <property type="project" value="UniProtKB"/>
</dbReference>
<dbReference type="GO" id="GO:0002040">
    <property type="term" value="P:sprouting angiogenesis"/>
    <property type="evidence" value="ECO:0000250"/>
    <property type="project" value="UniProtKB"/>
</dbReference>
<dbReference type="FunFam" id="3.40.50.10260:FF:000002">
    <property type="entry name" value="NAD(P)H-hydrate epimerase"/>
    <property type="match status" value="1"/>
</dbReference>
<dbReference type="Gene3D" id="3.40.50.10260">
    <property type="entry name" value="YjeF N-terminal domain"/>
    <property type="match status" value="1"/>
</dbReference>
<dbReference type="HAMAP" id="MF_01966">
    <property type="entry name" value="NADHX_epimerase"/>
    <property type="match status" value="1"/>
</dbReference>
<dbReference type="InterPro" id="IPR004443">
    <property type="entry name" value="YjeF_N_dom"/>
</dbReference>
<dbReference type="InterPro" id="IPR036652">
    <property type="entry name" value="YjeF_N_dom_sf"/>
</dbReference>
<dbReference type="InterPro" id="IPR032976">
    <property type="entry name" value="YJEFN_prot_NAXE-like"/>
</dbReference>
<dbReference type="NCBIfam" id="TIGR00197">
    <property type="entry name" value="yjeF_nterm"/>
    <property type="match status" value="1"/>
</dbReference>
<dbReference type="PANTHER" id="PTHR13232">
    <property type="entry name" value="NAD(P)H-HYDRATE EPIMERASE"/>
    <property type="match status" value="1"/>
</dbReference>
<dbReference type="PANTHER" id="PTHR13232:SF11">
    <property type="entry name" value="NAD(P)H-HYDRATE EPIMERASE"/>
    <property type="match status" value="1"/>
</dbReference>
<dbReference type="Pfam" id="PF03853">
    <property type="entry name" value="YjeF_N"/>
    <property type="match status" value="1"/>
</dbReference>
<dbReference type="SUPFAM" id="SSF64153">
    <property type="entry name" value="YjeF N-terminal domain-like"/>
    <property type="match status" value="1"/>
</dbReference>
<dbReference type="PROSITE" id="PS51385">
    <property type="entry name" value="YJEF_N"/>
    <property type="match status" value="1"/>
</dbReference>
<reference key="1">
    <citation type="journal article" date="2004" name="Nature">
        <title>Genome sequence of the Brown Norway rat yields insights into mammalian evolution.</title>
        <authorList>
            <person name="Gibbs R.A."/>
            <person name="Weinstock G.M."/>
            <person name="Metzker M.L."/>
            <person name="Muzny D.M."/>
            <person name="Sodergren E.J."/>
            <person name="Scherer S."/>
            <person name="Scott G."/>
            <person name="Steffen D."/>
            <person name="Worley K.C."/>
            <person name="Burch P.E."/>
            <person name="Okwuonu G."/>
            <person name="Hines S."/>
            <person name="Lewis L."/>
            <person name="Deramo C."/>
            <person name="Delgado O."/>
            <person name="Dugan-Rocha S."/>
            <person name="Miner G."/>
            <person name="Morgan M."/>
            <person name="Hawes A."/>
            <person name="Gill R."/>
            <person name="Holt R.A."/>
            <person name="Adams M.D."/>
            <person name="Amanatides P.G."/>
            <person name="Baden-Tillson H."/>
            <person name="Barnstead M."/>
            <person name="Chin S."/>
            <person name="Evans C.A."/>
            <person name="Ferriera S."/>
            <person name="Fosler C."/>
            <person name="Glodek A."/>
            <person name="Gu Z."/>
            <person name="Jennings D."/>
            <person name="Kraft C.L."/>
            <person name="Nguyen T."/>
            <person name="Pfannkoch C.M."/>
            <person name="Sitter C."/>
            <person name="Sutton G.G."/>
            <person name="Venter J.C."/>
            <person name="Woodage T."/>
            <person name="Smith D."/>
            <person name="Lee H.-M."/>
            <person name="Gustafson E."/>
            <person name="Cahill P."/>
            <person name="Kana A."/>
            <person name="Doucette-Stamm L."/>
            <person name="Weinstock K."/>
            <person name="Fechtel K."/>
            <person name="Weiss R.B."/>
            <person name="Dunn D.M."/>
            <person name="Green E.D."/>
            <person name="Blakesley R.W."/>
            <person name="Bouffard G.G."/>
            <person name="De Jong P.J."/>
            <person name="Osoegawa K."/>
            <person name="Zhu B."/>
            <person name="Marra M."/>
            <person name="Schein J."/>
            <person name="Bosdet I."/>
            <person name="Fjell C."/>
            <person name="Jones S."/>
            <person name="Krzywinski M."/>
            <person name="Mathewson C."/>
            <person name="Siddiqui A."/>
            <person name="Wye N."/>
            <person name="McPherson J."/>
            <person name="Zhao S."/>
            <person name="Fraser C.M."/>
            <person name="Shetty J."/>
            <person name="Shatsman S."/>
            <person name="Geer K."/>
            <person name="Chen Y."/>
            <person name="Abramzon S."/>
            <person name="Nierman W.C."/>
            <person name="Havlak P.H."/>
            <person name="Chen R."/>
            <person name="Durbin K.J."/>
            <person name="Egan A."/>
            <person name="Ren Y."/>
            <person name="Song X.-Z."/>
            <person name="Li B."/>
            <person name="Liu Y."/>
            <person name="Qin X."/>
            <person name="Cawley S."/>
            <person name="Cooney A.J."/>
            <person name="D'Souza L.M."/>
            <person name="Martin K."/>
            <person name="Wu J.Q."/>
            <person name="Gonzalez-Garay M.L."/>
            <person name="Jackson A.R."/>
            <person name="Kalafus K.J."/>
            <person name="McLeod M.P."/>
            <person name="Milosavljevic A."/>
            <person name="Virk D."/>
            <person name="Volkov A."/>
            <person name="Wheeler D.A."/>
            <person name="Zhang Z."/>
            <person name="Bailey J.A."/>
            <person name="Eichler E.E."/>
            <person name="Tuzun E."/>
            <person name="Birney E."/>
            <person name="Mongin E."/>
            <person name="Ureta-Vidal A."/>
            <person name="Woodwark C."/>
            <person name="Zdobnov E."/>
            <person name="Bork P."/>
            <person name="Suyama M."/>
            <person name="Torrents D."/>
            <person name="Alexandersson M."/>
            <person name="Trask B.J."/>
            <person name="Young J.M."/>
            <person name="Huang H."/>
            <person name="Wang H."/>
            <person name="Xing H."/>
            <person name="Daniels S."/>
            <person name="Gietzen D."/>
            <person name="Schmidt J."/>
            <person name="Stevens K."/>
            <person name="Vitt U."/>
            <person name="Wingrove J."/>
            <person name="Camara F."/>
            <person name="Mar Alba M."/>
            <person name="Abril J.F."/>
            <person name="Guigo R."/>
            <person name="Smit A."/>
            <person name="Dubchak I."/>
            <person name="Rubin E.M."/>
            <person name="Couronne O."/>
            <person name="Poliakov A."/>
            <person name="Huebner N."/>
            <person name="Ganten D."/>
            <person name="Goesele C."/>
            <person name="Hummel O."/>
            <person name="Kreitler T."/>
            <person name="Lee Y.-A."/>
            <person name="Monti J."/>
            <person name="Schulz H."/>
            <person name="Zimdahl H."/>
            <person name="Himmelbauer H."/>
            <person name="Lehrach H."/>
            <person name="Jacob H.J."/>
            <person name="Bromberg S."/>
            <person name="Gullings-Handley J."/>
            <person name="Jensen-Seaman M.I."/>
            <person name="Kwitek A.E."/>
            <person name="Lazar J."/>
            <person name="Pasko D."/>
            <person name="Tonellato P.J."/>
            <person name="Twigger S."/>
            <person name="Ponting C.P."/>
            <person name="Duarte J.M."/>
            <person name="Rice S."/>
            <person name="Goodstadt L."/>
            <person name="Beatson S.A."/>
            <person name="Emes R.D."/>
            <person name="Winter E.E."/>
            <person name="Webber C."/>
            <person name="Brandt P."/>
            <person name="Nyakatura G."/>
            <person name="Adetobi M."/>
            <person name="Chiaromonte F."/>
            <person name="Elnitski L."/>
            <person name="Eswara P."/>
            <person name="Hardison R.C."/>
            <person name="Hou M."/>
            <person name="Kolbe D."/>
            <person name="Makova K."/>
            <person name="Miller W."/>
            <person name="Nekrutenko A."/>
            <person name="Riemer C."/>
            <person name="Schwartz S."/>
            <person name="Taylor J."/>
            <person name="Yang S."/>
            <person name="Zhang Y."/>
            <person name="Lindpaintner K."/>
            <person name="Andrews T.D."/>
            <person name="Caccamo M."/>
            <person name="Clamp M."/>
            <person name="Clarke L."/>
            <person name="Curwen V."/>
            <person name="Durbin R.M."/>
            <person name="Eyras E."/>
            <person name="Searle S.M."/>
            <person name="Cooper G.M."/>
            <person name="Batzoglou S."/>
            <person name="Brudno M."/>
            <person name="Sidow A."/>
            <person name="Stone E.A."/>
            <person name="Payseur B.A."/>
            <person name="Bourque G."/>
            <person name="Lopez-Otin C."/>
            <person name="Puente X.S."/>
            <person name="Chakrabarti K."/>
            <person name="Chatterji S."/>
            <person name="Dewey C."/>
            <person name="Pachter L."/>
            <person name="Bray N."/>
            <person name="Yap V.B."/>
            <person name="Caspi A."/>
            <person name="Tesler G."/>
            <person name="Pevzner P.A."/>
            <person name="Haussler D."/>
            <person name="Roskin K.M."/>
            <person name="Baertsch R."/>
            <person name="Clawson H."/>
            <person name="Furey T.S."/>
            <person name="Hinrichs A.S."/>
            <person name="Karolchik D."/>
            <person name="Kent W.J."/>
            <person name="Rosenbloom K.R."/>
            <person name="Trumbower H."/>
            <person name="Weirauch M."/>
            <person name="Cooper D.N."/>
            <person name="Stenson P.D."/>
            <person name="Ma B."/>
            <person name="Brent M."/>
            <person name="Arumugam M."/>
            <person name="Shteynberg D."/>
            <person name="Copley R.R."/>
            <person name="Taylor M.S."/>
            <person name="Riethman H."/>
            <person name="Mudunuri U."/>
            <person name="Peterson J."/>
            <person name="Guyer M."/>
            <person name="Felsenfeld A."/>
            <person name="Old S."/>
            <person name="Mockrin S."/>
            <person name="Collins F.S."/>
        </authorList>
    </citation>
    <scope>NUCLEOTIDE SEQUENCE [LARGE SCALE GENOMIC DNA]</scope>
    <source>
        <strain>Brown Norway</strain>
    </source>
</reference>
<reference key="2">
    <citation type="submission" date="2005-07" db="EMBL/GenBank/DDBJ databases">
        <authorList>
            <person name="Mural R.J."/>
            <person name="Adams M.D."/>
            <person name="Myers E.W."/>
            <person name="Smith H.O."/>
            <person name="Venter J.C."/>
        </authorList>
    </citation>
    <scope>NUCLEOTIDE SEQUENCE [LARGE SCALE GENOMIC DNA]</scope>
    <source>
        <strain>Brown Norway</strain>
    </source>
</reference>
<reference key="3">
    <citation type="journal article" date="2004" name="Genome Res.">
        <title>The status, quality, and expansion of the NIH full-length cDNA project: the Mammalian Gene Collection (MGC).</title>
        <authorList>
            <consortium name="The MGC Project Team"/>
        </authorList>
    </citation>
    <scope>NUCLEOTIDE SEQUENCE [LARGE SCALE MRNA]</scope>
    <source>
        <tissue>Prostate</tissue>
    </source>
</reference>
<accession>B0BNM1</accession>
<sequence length="282" mass="30891">MSGLRTLLGLGLLVAGSRLPRIASRQSVCRAGPIWWGTQHRSSETMASAAVKYLSQEEAQAVDEELFNEYQFSVDQLMELAGLSCATAIAKAYPPTSMSKSPPTVLVICGPGNNGGDGLVCARHLKLFGYQPTIYYPKRPNKPLFTGLVTQCQKMDIPFLGEMPPEPMMVDELYELVVDAIFGFSFKGDVREPFHSILSVLSGLTVPIASIDIPSGWDVEKGNPSGIQPDLLISLTAPKKSATQFTGRYHYLGGRFVPPALEKKYQLNLPAYPDTECVYRLQ</sequence>
<feature type="transit peptide" description="Mitochondrion" evidence="3">
    <location>
        <begin position="1"/>
        <end position="53"/>
    </location>
</feature>
<feature type="chain" id="PRO_0000416310" description="NAD(P)H-hydrate epimerase">
    <location>
        <begin position="54"/>
        <end position="282"/>
    </location>
</feature>
<feature type="domain" description="YjeF N-terminal" evidence="3">
    <location>
        <begin position="59"/>
        <end position="269"/>
    </location>
</feature>
<feature type="binding site" evidence="3">
    <location>
        <begin position="113"/>
        <end position="117"/>
    </location>
    <ligand>
        <name>(6S)-NADPHX</name>
        <dbReference type="ChEBI" id="CHEBI:64076"/>
    </ligand>
</feature>
<feature type="binding site" evidence="3">
    <location>
        <position position="114"/>
    </location>
    <ligand>
        <name>K(+)</name>
        <dbReference type="ChEBI" id="CHEBI:29103"/>
    </ligand>
</feature>
<feature type="binding site" evidence="3">
    <location>
        <position position="179"/>
    </location>
    <ligand>
        <name>K(+)</name>
        <dbReference type="ChEBI" id="CHEBI:29103"/>
    </ligand>
</feature>
<feature type="binding site" evidence="3">
    <location>
        <begin position="183"/>
        <end position="189"/>
    </location>
    <ligand>
        <name>(6S)-NADPHX</name>
        <dbReference type="ChEBI" id="CHEBI:64076"/>
    </ligand>
</feature>
<feature type="binding site" evidence="3">
    <location>
        <position position="212"/>
    </location>
    <ligand>
        <name>(6S)-NADPHX</name>
        <dbReference type="ChEBI" id="CHEBI:64076"/>
    </ligand>
</feature>
<feature type="binding site" evidence="3">
    <location>
        <position position="215"/>
    </location>
    <ligand>
        <name>K(+)</name>
        <dbReference type="ChEBI" id="CHEBI:29103"/>
    </ligand>
</feature>
<feature type="modified residue" description="N6-succinyllysine" evidence="1">
    <location>
        <position position="138"/>
    </location>
</feature>
<protein>
    <recommendedName>
        <fullName evidence="3">NAD(P)H-hydrate epimerase</fullName>
        <ecNumber evidence="2">5.1.99.6</ecNumber>
    </recommendedName>
    <alternativeName>
        <fullName evidence="3">Apolipoprotein A-I-binding protein</fullName>
        <shortName evidence="3">AI-BP</shortName>
    </alternativeName>
    <alternativeName>
        <fullName evidence="4">NAD(P)HX epimerase</fullName>
    </alternativeName>
</protein>
<keyword id="KW-0413">Isomerase</keyword>
<keyword id="KW-0445">Lipid transport</keyword>
<keyword id="KW-0479">Metal-binding</keyword>
<keyword id="KW-0496">Mitochondrion</keyword>
<keyword id="KW-0520">NAD</keyword>
<keyword id="KW-0521">NADP</keyword>
<keyword id="KW-0547">Nucleotide-binding</keyword>
<keyword id="KW-0597">Phosphoprotein</keyword>
<keyword id="KW-0630">Potassium</keyword>
<keyword id="KW-1185">Reference proteome</keyword>
<keyword id="KW-0964">Secreted</keyword>
<keyword id="KW-0809">Transit peptide</keyword>
<keyword id="KW-0813">Transport</keyword>
<organism>
    <name type="scientific">Rattus norvegicus</name>
    <name type="common">Rat</name>
    <dbReference type="NCBI Taxonomy" id="10116"/>
    <lineage>
        <taxon>Eukaryota</taxon>
        <taxon>Metazoa</taxon>
        <taxon>Chordata</taxon>
        <taxon>Craniata</taxon>
        <taxon>Vertebrata</taxon>
        <taxon>Euteleostomi</taxon>
        <taxon>Mammalia</taxon>
        <taxon>Eutheria</taxon>
        <taxon>Euarchontoglires</taxon>
        <taxon>Glires</taxon>
        <taxon>Rodentia</taxon>
        <taxon>Myomorpha</taxon>
        <taxon>Muroidea</taxon>
        <taxon>Muridae</taxon>
        <taxon>Murinae</taxon>
        <taxon>Rattus</taxon>
    </lineage>
</organism>
<comment type="function">
    <text evidence="2 3">Catalyzes the epimerization of the S- and R-forms of NAD(P)HX, a damaged form of NAD(P)H that is a result of enzymatic or heat-dependent hydration. This is a prerequisite for the S-specific NAD(P)H-hydrate dehydratase to allow the repair of both epimers of NAD(P)HX. Accelerates cholesterol efflux from endothelial cells to high-density lipoprotein (HDL) and thereby regulates angiogenesis (By similarity).</text>
</comment>
<comment type="catalytic activity">
    <reaction evidence="2">
        <text>(6R)-NADHX = (6S)-NADHX</text>
        <dbReference type="Rhea" id="RHEA:32215"/>
        <dbReference type="ChEBI" id="CHEBI:64074"/>
        <dbReference type="ChEBI" id="CHEBI:64075"/>
        <dbReference type="EC" id="5.1.99.6"/>
    </reaction>
</comment>
<comment type="catalytic activity">
    <reaction evidence="2">
        <text>(6R)-NADPHX = (6S)-NADPHX</text>
        <dbReference type="Rhea" id="RHEA:32227"/>
        <dbReference type="ChEBI" id="CHEBI:64076"/>
        <dbReference type="ChEBI" id="CHEBI:64077"/>
        <dbReference type="EC" id="5.1.99.6"/>
    </reaction>
</comment>
<comment type="cofactor">
    <cofactor evidence="3">
        <name>K(+)</name>
        <dbReference type="ChEBI" id="CHEBI:29103"/>
    </cofactor>
    <text evidence="3">Binds 1 potassium ion per subunit.</text>
</comment>
<comment type="subunit">
    <text evidence="1 2">Homodimer (By similarity). Interacts with APOA1 and APOA2 (By similarity).</text>
</comment>
<comment type="subcellular location">
    <subcellularLocation>
        <location evidence="3">Mitochondrion</location>
    </subcellularLocation>
    <subcellularLocation>
        <location evidence="3">Secreted</location>
    </subcellularLocation>
    <text evidence="3">In sperm, secretion gradually increases during capacitation.</text>
</comment>
<comment type="PTM">
    <text evidence="3">Undergoes physiological phosphorylation during sperm capacitation, downstream to PKA activation.</text>
</comment>
<comment type="similarity">
    <text evidence="3">Belongs to the NnrE/AIBP family.</text>
</comment>
<name>NNRE_RAT</name>
<gene>
    <name evidence="4" type="primary">Naxe</name>
    <name type="synonym">Aibp</name>
    <name type="synonym">Apoa1bp</name>
</gene>